<gene>
    <name type="ordered locus">Os02g0209000</name>
    <name type="ordered locus">LOC_Os02g11830</name>
    <name type="ORF">OJ1006_A02.22</name>
</gene>
<evidence type="ECO:0000250" key="1"/>
<evidence type="ECO:0000256" key="2">
    <source>
        <dbReference type="SAM" id="MobiDB-lite"/>
    </source>
</evidence>
<evidence type="ECO:0000305" key="3"/>
<reference key="1">
    <citation type="journal article" date="2005" name="Nature">
        <title>The map-based sequence of the rice genome.</title>
        <authorList>
            <consortium name="International rice genome sequencing project (IRGSP)"/>
        </authorList>
    </citation>
    <scope>NUCLEOTIDE SEQUENCE [LARGE SCALE GENOMIC DNA]</scope>
    <source>
        <strain>cv. Nipponbare</strain>
    </source>
</reference>
<reference key="2">
    <citation type="journal article" date="2008" name="Nucleic Acids Res.">
        <title>The rice annotation project database (RAP-DB): 2008 update.</title>
        <authorList>
            <consortium name="The rice annotation project (RAP)"/>
        </authorList>
    </citation>
    <scope>GENOME REANNOTATION</scope>
    <source>
        <strain>cv. Nipponbare</strain>
    </source>
</reference>
<reference key="3">
    <citation type="journal article" date="2013" name="Rice">
        <title>Improvement of the Oryza sativa Nipponbare reference genome using next generation sequence and optical map data.</title>
        <authorList>
            <person name="Kawahara Y."/>
            <person name="de la Bastide M."/>
            <person name="Hamilton J.P."/>
            <person name="Kanamori H."/>
            <person name="McCombie W.R."/>
            <person name="Ouyang S."/>
            <person name="Schwartz D.C."/>
            <person name="Tanaka T."/>
            <person name="Wu J."/>
            <person name="Zhou S."/>
            <person name="Childs K.L."/>
            <person name="Davidson R.M."/>
            <person name="Lin H."/>
            <person name="Quesada-Ocampo L."/>
            <person name="Vaillancourt B."/>
            <person name="Sakai H."/>
            <person name="Lee S.S."/>
            <person name="Kim J."/>
            <person name="Numa H."/>
            <person name="Itoh T."/>
            <person name="Buell C.R."/>
            <person name="Matsumoto T."/>
        </authorList>
    </citation>
    <scope>GENOME REANNOTATION</scope>
    <source>
        <strain>cv. Nipponbare</strain>
    </source>
</reference>
<organism>
    <name type="scientific">Oryza sativa subsp. japonica</name>
    <name type="common">Rice</name>
    <dbReference type="NCBI Taxonomy" id="39947"/>
    <lineage>
        <taxon>Eukaryota</taxon>
        <taxon>Viridiplantae</taxon>
        <taxon>Streptophyta</taxon>
        <taxon>Embryophyta</taxon>
        <taxon>Tracheophyta</taxon>
        <taxon>Spermatophyta</taxon>
        <taxon>Magnoliopsida</taxon>
        <taxon>Liliopsida</taxon>
        <taxon>Poales</taxon>
        <taxon>Poaceae</taxon>
        <taxon>BOP clade</taxon>
        <taxon>Oryzoideae</taxon>
        <taxon>Oryzeae</taxon>
        <taxon>Oryzinae</taxon>
        <taxon>Oryza</taxon>
        <taxon>Oryza sativa</taxon>
    </lineage>
</organism>
<protein>
    <recommendedName>
        <fullName>Putative coatomer subunit beta'-3</fullName>
    </recommendedName>
    <alternativeName>
        <fullName>Beta'-coat protein 3</fullName>
        <shortName>Beta'-COP 3</shortName>
    </alternativeName>
</protein>
<dbReference type="EMBL" id="AP003977">
    <property type="protein sequence ID" value="BAD25013.1"/>
    <property type="status" value="ALT_SEQ"/>
    <property type="molecule type" value="Genomic_DNA"/>
</dbReference>
<dbReference type="EMBL" id="AP008208">
    <property type="protein sequence ID" value="BAF08177.2"/>
    <property type="status" value="ALT_SEQ"/>
    <property type="molecule type" value="Genomic_DNA"/>
</dbReference>
<dbReference type="EMBL" id="AP014958">
    <property type="status" value="NOT_ANNOTATED_CDS"/>
    <property type="molecule type" value="Genomic_DNA"/>
</dbReference>
<dbReference type="SMR" id="Q6H8D6"/>
<dbReference type="FunCoup" id="Q6H8D6">
    <property type="interactions" value="3258"/>
</dbReference>
<dbReference type="STRING" id="39947.Q6H8D6"/>
<dbReference type="PaxDb" id="39947-Q6H8D6"/>
<dbReference type="KEGG" id="dosa:Os02g0209000"/>
<dbReference type="eggNOG" id="KOG0276">
    <property type="taxonomic scope" value="Eukaryota"/>
</dbReference>
<dbReference type="InParanoid" id="Q6H8D6"/>
<dbReference type="Proteomes" id="UP000000763">
    <property type="component" value="Chromosome 2"/>
</dbReference>
<dbReference type="Proteomes" id="UP000059680">
    <property type="component" value="Chromosome 2"/>
</dbReference>
<dbReference type="GO" id="GO:0030126">
    <property type="term" value="C:COPI vesicle coat"/>
    <property type="evidence" value="ECO:0000318"/>
    <property type="project" value="GO_Central"/>
</dbReference>
<dbReference type="GO" id="GO:0000139">
    <property type="term" value="C:Golgi membrane"/>
    <property type="evidence" value="ECO:0007669"/>
    <property type="project" value="UniProtKB-SubCell"/>
</dbReference>
<dbReference type="GO" id="GO:0005198">
    <property type="term" value="F:structural molecule activity"/>
    <property type="evidence" value="ECO:0007669"/>
    <property type="project" value="InterPro"/>
</dbReference>
<dbReference type="GO" id="GO:0006888">
    <property type="term" value="P:endoplasmic reticulum to Golgi vesicle-mediated transport"/>
    <property type="evidence" value="ECO:0000318"/>
    <property type="project" value="GO_Central"/>
</dbReference>
<dbReference type="GO" id="GO:0006891">
    <property type="term" value="P:intra-Golgi vesicle-mediated transport"/>
    <property type="evidence" value="ECO:0000318"/>
    <property type="project" value="GO_Central"/>
</dbReference>
<dbReference type="GO" id="GO:0006886">
    <property type="term" value="P:intracellular protein transport"/>
    <property type="evidence" value="ECO:0000318"/>
    <property type="project" value="GO_Central"/>
</dbReference>
<dbReference type="GO" id="GO:0006890">
    <property type="term" value="P:retrograde vesicle-mediated transport, Golgi to endoplasmic reticulum"/>
    <property type="evidence" value="ECO:0000318"/>
    <property type="project" value="GO_Central"/>
</dbReference>
<dbReference type="CDD" id="cd22947">
    <property type="entry name" value="Coatomer_WDAD_beta-like"/>
    <property type="match status" value="1"/>
</dbReference>
<dbReference type="CDD" id="cd00200">
    <property type="entry name" value="WD40"/>
    <property type="match status" value="1"/>
</dbReference>
<dbReference type="FunFam" id="1.25.40.470:FF:000001">
    <property type="entry name" value="Coatomer subunit beta"/>
    <property type="match status" value="1"/>
</dbReference>
<dbReference type="FunFam" id="2.130.10.10:FF:000008">
    <property type="entry name" value="Coatomer subunit beta"/>
    <property type="match status" value="1"/>
</dbReference>
<dbReference type="Gene3D" id="1.25.40.470">
    <property type="match status" value="1"/>
</dbReference>
<dbReference type="Gene3D" id="2.130.10.10">
    <property type="entry name" value="YVTN repeat-like/Quinoprotein amine dehydrogenase"/>
    <property type="match status" value="1"/>
</dbReference>
<dbReference type="InterPro" id="IPR006692">
    <property type="entry name" value="Beta-prop_COPA/B_2nd"/>
</dbReference>
<dbReference type="InterPro" id="IPR050844">
    <property type="entry name" value="Coatomer_complex_subunit"/>
</dbReference>
<dbReference type="InterPro" id="IPR016453">
    <property type="entry name" value="COPB2"/>
</dbReference>
<dbReference type="InterPro" id="IPR020472">
    <property type="entry name" value="G-protein_beta_WD-40_rep"/>
</dbReference>
<dbReference type="InterPro" id="IPR011048">
    <property type="entry name" value="Haem_d1_sf"/>
</dbReference>
<dbReference type="InterPro" id="IPR056176">
    <property type="entry name" value="TPR_COPA_B"/>
</dbReference>
<dbReference type="InterPro" id="IPR015943">
    <property type="entry name" value="WD40/YVTN_repeat-like_dom_sf"/>
</dbReference>
<dbReference type="InterPro" id="IPR036322">
    <property type="entry name" value="WD40_repeat_dom_sf"/>
</dbReference>
<dbReference type="InterPro" id="IPR001680">
    <property type="entry name" value="WD40_rpt"/>
</dbReference>
<dbReference type="PANTHER" id="PTHR19876">
    <property type="entry name" value="COATOMER"/>
    <property type="match status" value="1"/>
</dbReference>
<dbReference type="PANTHER" id="PTHR19876:SF68">
    <property type="entry name" value="COATOMER SUBUNIT BETA'-2"/>
    <property type="match status" value="1"/>
</dbReference>
<dbReference type="Pfam" id="PF04053">
    <property type="entry name" value="B-prop_COPA_B_2nd"/>
    <property type="match status" value="1"/>
</dbReference>
<dbReference type="Pfam" id="PF23953">
    <property type="entry name" value="TPR_COPA_B"/>
    <property type="match status" value="1"/>
</dbReference>
<dbReference type="Pfam" id="PF00400">
    <property type="entry name" value="WD40"/>
    <property type="match status" value="5"/>
</dbReference>
<dbReference type="PIRSF" id="PIRSF005567">
    <property type="entry name" value="Coatomer_beta'_subunit"/>
    <property type="match status" value="1"/>
</dbReference>
<dbReference type="PRINTS" id="PR00320">
    <property type="entry name" value="GPROTEINBRPT"/>
</dbReference>
<dbReference type="SMART" id="SM00320">
    <property type="entry name" value="WD40"/>
    <property type="match status" value="6"/>
</dbReference>
<dbReference type="SUPFAM" id="SSF51004">
    <property type="entry name" value="C-terminal (heme d1) domain of cytochrome cd1-nitrite reductase"/>
    <property type="match status" value="1"/>
</dbReference>
<dbReference type="SUPFAM" id="SSF50978">
    <property type="entry name" value="WD40 repeat-like"/>
    <property type="match status" value="1"/>
</dbReference>
<dbReference type="PROSITE" id="PS50082">
    <property type="entry name" value="WD_REPEATS_2"/>
    <property type="match status" value="4"/>
</dbReference>
<dbReference type="PROSITE" id="PS50294">
    <property type="entry name" value="WD_REPEATS_REGION"/>
    <property type="match status" value="1"/>
</dbReference>
<accession>Q6H8D6</accession>
<accession>Q0E2W1</accession>
<feature type="chain" id="PRO_0000285609" description="Putative coatomer subunit beta'-3">
    <location>
        <begin position="1"/>
        <end position="910"/>
    </location>
</feature>
<feature type="repeat" description="WD 1">
    <location>
        <begin position="13"/>
        <end position="52"/>
    </location>
</feature>
<feature type="repeat" description="WD 2">
    <location>
        <begin position="55"/>
        <end position="94"/>
    </location>
</feature>
<feature type="repeat" description="WD 3">
    <location>
        <begin position="97"/>
        <end position="136"/>
    </location>
</feature>
<feature type="repeat" description="WD 4">
    <location>
        <begin position="140"/>
        <end position="180"/>
    </location>
</feature>
<feature type="repeat" description="WD 5">
    <location>
        <begin position="183"/>
        <end position="224"/>
    </location>
</feature>
<feature type="repeat" description="WD 6">
    <location>
        <begin position="227"/>
        <end position="266"/>
    </location>
</feature>
<feature type="repeat" description="WD 7">
    <location>
        <begin position="269"/>
        <end position="309"/>
    </location>
</feature>
<feature type="repeat" description="WD 8">
    <location>
        <begin position="351"/>
        <end position="393"/>
    </location>
</feature>
<feature type="repeat" description="WD 9">
    <location>
        <begin position="461"/>
        <end position="501"/>
    </location>
</feature>
<feature type="region of interest" description="Disordered" evidence="2">
    <location>
        <begin position="865"/>
        <end position="910"/>
    </location>
</feature>
<feature type="compositionally biased region" description="Acidic residues" evidence="2">
    <location>
        <begin position="865"/>
        <end position="884"/>
    </location>
</feature>
<feature type="compositionally biased region" description="Polar residues" evidence="2">
    <location>
        <begin position="886"/>
        <end position="910"/>
    </location>
</feature>
<proteinExistence type="inferred from homology"/>
<sequence length="910" mass="102837">MPLRLDIKRKLAQRSERAKSVDLHPTEPWILSSLYSGSVCIWNYQTQTMVKSFEVTELPVRSSKFITRKQWVVAGADDMFIRVYNYNTMDKVKVFEAHTDYIRCVAVHPTQPFVLSSSDDMLIKLWDWDKGWMCTQIFEGHSHYVMQVTFNPKDTNTFASASLDRTVKVWSLGSPDPNFTLDGHSKGVNCVDYFTGGDRPYLITGSDDQTAKVWDYQTKSCVQTLEGHAHNVSAVCFHPELPIILTGSEDGTVRLWHSTTYRLENTLNYGLERVWALGYMKGSRRVVIGYDEGTIMIKIGREVPVASMDSSGKIIWSKHNEIQTVNIKTIGADNEIADGERLPLVVKELGTCDLYPQSLRHNPNGRFVVVCGDGEYIIYTALAWRNRSFGSALEFVWSLDGEYAVRESTSRIKIYSKNFQERKSIRPPFSAERIFGGVLLAMCTNDFICFHDWAEGRMIRRIDVNVKNLYWADSGDLVTIASDTSFYILKYNRDVVSSHLDGGGSVGEEGVEDAFELLHEINERIRTGLWVGDCFIYNNSSSRLNYCVGGEVTTLFHLDRQMYLLGYLANQSRVYLIDKQFNVVGYTLLLTMIEYKTLVMRGDFDRANALLPSIPKEQHDSVARFLESRGMLEEALEIATDSNYRFDLAVQLGRLEVAKAIAIEAQSESKWRQLGELAMSTGKLDMAEECLLHAMDLSGLLLLYSSLGDAEGLTKLTSMAKEQGKNNVAFLCFFMLGKLEECLQLLIESNRIPEAALMSRSYLPSKVPEIVTLWKKDLQKVNPKAAESLADPNEYPNLFEDWQIALNVEANVAPKRGIYAPAKEYIIHAERPNETLVEAFKNMRIHQEEVLPDENGDDTHEAIEENGVEESQEDAVEVDVEADGSTDGTVLVNGNDTEEQWGTNNEESLA</sequence>
<comment type="function">
    <text evidence="1">The coatomer is a cytosolic protein complex that binds to dilysine motifs and reversibly associates with Golgi non-clathrin-coated vesicles, which further mediate biosynthetic protein transport from the ER, via the Golgi up to the trans Golgi network. Coatomer complex is required for budding from Golgi membranes, and is essential for the retrograde Golgi-to-ER transport of dilysine-tagged proteins (By similarity).</text>
</comment>
<comment type="subunit">
    <text evidence="1">Oligomeric complex that consists of at least the alpha, beta, beta', gamma, delta, epsilon and zeta subunits.</text>
</comment>
<comment type="subcellular location">
    <subcellularLocation>
        <location evidence="1">Cytoplasm</location>
    </subcellularLocation>
    <subcellularLocation>
        <location evidence="1">Golgi apparatus membrane</location>
        <topology evidence="1">Peripheral membrane protein</topology>
        <orientation evidence="1">Cytoplasmic side</orientation>
    </subcellularLocation>
    <subcellularLocation>
        <location evidence="1">Cytoplasmic vesicle</location>
        <location evidence="1">COPI-coated vesicle membrane</location>
        <topology evidence="1">Peripheral membrane protein</topology>
        <orientation evidence="1">Cytoplasmic side</orientation>
    </subcellularLocation>
    <text evidence="1">The coatomer is cytoplasmic or polymerized on the cytoplasmic side of the Golgi, as well as on the vesicles/buds originating from it.</text>
</comment>
<comment type="similarity">
    <text evidence="3">Belongs to the WD repeat COPB2 family.</text>
</comment>
<comment type="sequence caution" evidence="3">
    <conflict type="erroneous gene model prediction">
        <sequence resource="EMBL-CDS" id="BAD25013"/>
    </conflict>
</comment>
<comment type="sequence caution" evidence="3">
    <conflict type="erroneous gene model prediction">
        <sequence resource="EMBL-CDS" id="BAF08177"/>
    </conflict>
</comment>
<keyword id="KW-0963">Cytoplasm</keyword>
<keyword id="KW-0968">Cytoplasmic vesicle</keyword>
<keyword id="KW-0931">ER-Golgi transport</keyword>
<keyword id="KW-0333">Golgi apparatus</keyword>
<keyword id="KW-0472">Membrane</keyword>
<keyword id="KW-0653">Protein transport</keyword>
<keyword id="KW-1185">Reference proteome</keyword>
<keyword id="KW-0677">Repeat</keyword>
<keyword id="KW-0813">Transport</keyword>
<keyword id="KW-0853">WD repeat</keyword>
<name>COB23_ORYSJ</name>